<organism>
    <name type="scientific">Jannaschia sp. (strain CCS1)</name>
    <dbReference type="NCBI Taxonomy" id="290400"/>
    <lineage>
        <taxon>Bacteria</taxon>
        <taxon>Pseudomonadati</taxon>
        <taxon>Pseudomonadota</taxon>
        <taxon>Alphaproteobacteria</taxon>
        <taxon>Rhodobacterales</taxon>
        <taxon>Roseobacteraceae</taxon>
        <taxon>Jannaschia</taxon>
    </lineage>
</organism>
<dbReference type="EC" id="3.4.25.2" evidence="1"/>
<dbReference type="EMBL" id="CP000264">
    <property type="protein sequence ID" value="ABD53102.1"/>
    <property type="molecule type" value="Genomic_DNA"/>
</dbReference>
<dbReference type="RefSeq" id="WP_011453311.1">
    <property type="nucleotide sequence ID" value="NC_007802.1"/>
</dbReference>
<dbReference type="SMR" id="Q28W10"/>
<dbReference type="STRING" id="290400.Jann_0185"/>
<dbReference type="MEROPS" id="T01.006"/>
<dbReference type="KEGG" id="jan:Jann_0185"/>
<dbReference type="eggNOG" id="COG5405">
    <property type="taxonomic scope" value="Bacteria"/>
</dbReference>
<dbReference type="HOGENOM" id="CLU_093872_1_0_5"/>
<dbReference type="OrthoDB" id="9804884at2"/>
<dbReference type="Proteomes" id="UP000008326">
    <property type="component" value="Chromosome"/>
</dbReference>
<dbReference type="GO" id="GO:0009376">
    <property type="term" value="C:HslUV protease complex"/>
    <property type="evidence" value="ECO:0007669"/>
    <property type="project" value="UniProtKB-UniRule"/>
</dbReference>
<dbReference type="GO" id="GO:0005839">
    <property type="term" value="C:proteasome core complex"/>
    <property type="evidence" value="ECO:0007669"/>
    <property type="project" value="InterPro"/>
</dbReference>
<dbReference type="GO" id="GO:0046872">
    <property type="term" value="F:metal ion binding"/>
    <property type="evidence" value="ECO:0007669"/>
    <property type="project" value="UniProtKB-KW"/>
</dbReference>
<dbReference type="GO" id="GO:0004298">
    <property type="term" value="F:threonine-type endopeptidase activity"/>
    <property type="evidence" value="ECO:0007669"/>
    <property type="project" value="UniProtKB-KW"/>
</dbReference>
<dbReference type="GO" id="GO:0051603">
    <property type="term" value="P:proteolysis involved in protein catabolic process"/>
    <property type="evidence" value="ECO:0007669"/>
    <property type="project" value="InterPro"/>
</dbReference>
<dbReference type="CDD" id="cd01913">
    <property type="entry name" value="protease_HslV"/>
    <property type="match status" value="1"/>
</dbReference>
<dbReference type="Gene3D" id="3.60.20.10">
    <property type="entry name" value="Glutamine Phosphoribosylpyrophosphate, subunit 1, domain 1"/>
    <property type="match status" value="1"/>
</dbReference>
<dbReference type="HAMAP" id="MF_00248">
    <property type="entry name" value="HslV"/>
    <property type="match status" value="1"/>
</dbReference>
<dbReference type="InterPro" id="IPR022281">
    <property type="entry name" value="ATP-dep_Prtase_HsIV_su"/>
</dbReference>
<dbReference type="InterPro" id="IPR029055">
    <property type="entry name" value="Ntn_hydrolases_N"/>
</dbReference>
<dbReference type="InterPro" id="IPR001353">
    <property type="entry name" value="Proteasome_sua/b"/>
</dbReference>
<dbReference type="InterPro" id="IPR023333">
    <property type="entry name" value="Proteasome_suB-type"/>
</dbReference>
<dbReference type="NCBIfam" id="TIGR03692">
    <property type="entry name" value="ATP_dep_HslV"/>
    <property type="match status" value="1"/>
</dbReference>
<dbReference type="NCBIfam" id="NF003964">
    <property type="entry name" value="PRK05456.1"/>
    <property type="match status" value="1"/>
</dbReference>
<dbReference type="PANTHER" id="PTHR32194:SF7">
    <property type="entry name" value="ATP-DEPENDENT PROTEASE SUBUNIT HSLV"/>
    <property type="match status" value="1"/>
</dbReference>
<dbReference type="PANTHER" id="PTHR32194">
    <property type="entry name" value="METALLOPROTEASE TLDD"/>
    <property type="match status" value="1"/>
</dbReference>
<dbReference type="Pfam" id="PF00227">
    <property type="entry name" value="Proteasome"/>
    <property type="match status" value="1"/>
</dbReference>
<dbReference type="SUPFAM" id="SSF56235">
    <property type="entry name" value="N-terminal nucleophile aminohydrolases (Ntn hydrolases)"/>
    <property type="match status" value="1"/>
</dbReference>
<dbReference type="PROSITE" id="PS51476">
    <property type="entry name" value="PROTEASOME_BETA_2"/>
    <property type="match status" value="1"/>
</dbReference>
<feature type="chain" id="PRO_0000336776" description="ATP-dependent protease subunit HslV">
    <location>
        <begin position="1"/>
        <end position="185"/>
    </location>
</feature>
<feature type="active site" evidence="1">
    <location>
        <position position="12"/>
    </location>
</feature>
<feature type="binding site" evidence="1">
    <location>
        <position position="168"/>
    </location>
    <ligand>
        <name>Na(+)</name>
        <dbReference type="ChEBI" id="CHEBI:29101"/>
    </ligand>
</feature>
<feature type="binding site" evidence="1">
    <location>
        <position position="171"/>
    </location>
    <ligand>
        <name>Na(+)</name>
        <dbReference type="ChEBI" id="CHEBI:29101"/>
    </ligand>
</feature>
<feature type="binding site" evidence="1">
    <location>
        <position position="174"/>
    </location>
    <ligand>
        <name>Na(+)</name>
        <dbReference type="ChEBI" id="CHEBI:29101"/>
    </ligand>
</feature>
<reference key="1">
    <citation type="submission" date="2006-02" db="EMBL/GenBank/DDBJ databases">
        <title>Complete sequence of chromosome of Jannaschia sp. CCS1.</title>
        <authorList>
            <consortium name="US DOE Joint Genome Institute"/>
            <person name="Copeland A."/>
            <person name="Lucas S."/>
            <person name="Lapidus A."/>
            <person name="Barry K."/>
            <person name="Detter J.C."/>
            <person name="Glavina del Rio T."/>
            <person name="Hammon N."/>
            <person name="Israni S."/>
            <person name="Pitluck S."/>
            <person name="Brettin T."/>
            <person name="Bruce D."/>
            <person name="Han C."/>
            <person name="Tapia R."/>
            <person name="Gilna P."/>
            <person name="Chertkov O."/>
            <person name="Saunders E."/>
            <person name="Schmutz J."/>
            <person name="Larimer F."/>
            <person name="Land M."/>
            <person name="Kyrpides N."/>
            <person name="Lykidis A."/>
            <person name="Moran M.A."/>
            <person name="Belas R."/>
            <person name="Ye W."/>
            <person name="Buchan A."/>
            <person name="Gonzalez J.M."/>
            <person name="Schell M.A."/>
            <person name="Richardson P."/>
        </authorList>
    </citation>
    <scope>NUCLEOTIDE SEQUENCE [LARGE SCALE GENOMIC DNA]</scope>
    <source>
        <strain>CCS1</strain>
    </source>
</reference>
<accession>Q28W10</accession>
<gene>
    <name evidence="1" type="primary">hslV</name>
    <name type="ordered locus">Jann_0185</name>
</gene>
<proteinExistence type="inferred from homology"/>
<keyword id="KW-0021">Allosteric enzyme</keyword>
<keyword id="KW-0963">Cytoplasm</keyword>
<keyword id="KW-0378">Hydrolase</keyword>
<keyword id="KW-0479">Metal-binding</keyword>
<keyword id="KW-0645">Protease</keyword>
<keyword id="KW-1185">Reference proteome</keyword>
<keyword id="KW-0915">Sodium</keyword>
<keyword id="KW-0888">Threonine protease</keyword>
<name>HSLV_JANSC</name>
<evidence type="ECO:0000255" key="1">
    <source>
        <dbReference type="HAMAP-Rule" id="MF_00248"/>
    </source>
</evidence>
<sequence>MAKEEFPGWHGTTIIGVRKGGKVVVAGDGQVSLGPTVIKGSARKVRRLSPGGYDVVCGFAGSTADAFTLLERLEAKLEATPGQLQRASVELAKDWRTDKYLQKLEAMLIVTDGSELYIITGAGDVLEPEHDIAAIGSGGNFALAAARGMMDSDKDAEAVARDAMAIASDICVYTNGNLTVETISA</sequence>
<protein>
    <recommendedName>
        <fullName evidence="1">ATP-dependent protease subunit HslV</fullName>
        <ecNumber evidence="1">3.4.25.2</ecNumber>
    </recommendedName>
</protein>
<comment type="function">
    <text evidence="1">Protease subunit of a proteasome-like degradation complex believed to be a general protein degrading machinery.</text>
</comment>
<comment type="catalytic activity">
    <reaction evidence="1">
        <text>ATP-dependent cleavage of peptide bonds with broad specificity.</text>
        <dbReference type="EC" id="3.4.25.2"/>
    </reaction>
</comment>
<comment type="activity regulation">
    <text evidence="1">Allosterically activated by HslU binding.</text>
</comment>
<comment type="subunit">
    <text evidence="1">A double ring-shaped homohexamer of HslV is capped on each side by a ring-shaped HslU homohexamer. The assembly of the HslU/HslV complex is dependent on binding of ATP.</text>
</comment>
<comment type="subcellular location">
    <subcellularLocation>
        <location evidence="1">Cytoplasm</location>
    </subcellularLocation>
</comment>
<comment type="similarity">
    <text evidence="1">Belongs to the peptidase T1B family. HslV subfamily.</text>
</comment>